<evidence type="ECO:0000255" key="1">
    <source>
        <dbReference type="HAMAP-Rule" id="MF_01844"/>
    </source>
</evidence>
<reference key="1">
    <citation type="journal article" date="2009" name="BMC Genomics">
        <title>Metabolic analysis of the soil microbe Dechloromonas aromatica str. RCB: indications of a surprisingly complex life-style and cryptic anaerobic pathways for aromatic degradation.</title>
        <authorList>
            <person name="Salinero K.K."/>
            <person name="Keller K."/>
            <person name="Feil W.S."/>
            <person name="Feil H."/>
            <person name="Trong S."/>
            <person name="Di Bartolo G."/>
            <person name="Lapidus A."/>
        </authorList>
    </citation>
    <scope>NUCLEOTIDE SEQUENCE [LARGE SCALE GENOMIC DNA]</scope>
    <source>
        <strain>RCB</strain>
    </source>
</reference>
<feature type="chain" id="PRO_0000334272" description="Na(+)/H(+) antiporter NhaA">
    <location>
        <begin position="1"/>
        <end position="389"/>
    </location>
</feature>
<feature type="transmembrane region" description="Helical" evidence="1">
    <location>
        <begin position="24"/>
        <end position="44"/>
    </location>
</feature>
<feature type="transmembrane region" description="Helical" evidence="1">
    <location>
        <begin position="56"/>
        <end position="76"/>
    </location>
</feature>
<feature type="transmembrane region" description="Helical" evidence="1">
    <location>
        <begin position="94"/>
        <end position="114"/>
    </location>
</feature>
<feature type="transmembrane region" description="Helical" evidence="1">
    <location>
        <begin position="122"/>
        <end position="142"/>
    </location>
</feature>
<feature type="transmembrane region" description="Helical" evidence="1">
    <location>
        <begin position="152"/>
        <end position="172"/>
    </location>
</feature>
<feature type="transmembrane region" description="Helical" evidence="1">
    <location>
        <begin position="176"/>
        <end position="196"/>
    </location>
</feature>
<feature type="transmembrane region" description="Helical" evidence="1">
    <location>
        <begin position="216"/>
        <end position="236"/>
    </location>
</feature>
<feature type="transmembrane region" description="Helical" evidence="1">
    <location>
        <begin position="259"/>
        <end position="279"/>
    </location>
</feature>
<feature type="transmembrane region" description="Helical" evidence="1">
    <location>
        <begin position="291"/>
        <end position="311"/>
    </location>
</feature>
<feature type="transmembrane region" description="Helical" evidence="1">
    <location>
        <begin position="326"/>
        <end position="346"/>
    </location>
</feature>
<feature type="transmembrane region" description="Helical" evidence="1">
    <location>
        <begin position="363"/>
        <end position="383"/>
    </location>
</feature>
<protein>
    <recommendedName>
        <fullName evidence="1">Na(+)/H(+) antiporter NhaA</fullName>
    </recommendedName>
    <alternativeName>
        <fullName evidence="1">Sodium/proton antiporter NhaA</fullName>
    </alternativeName>
</protein>
<comment type="function">
    <text evidence="1">Na(+)/H(+) antiporter that extrudes sodium in exchange for external protons.</text>
</comment>
<comment type="catalytic activity">
    <reaction evidence="1">
        <text>Na(+)(in) + 2 H(+)(out) = Na(+)(out) + 2 H(+)(in)</text>
        <dbReference type="Rhea" id="RHEA:29251"/>
        <dbReference type="ChEBI" id="CHEBI:15378"/>
        <dbReference type="ChEBI" id="CHEBI:29101"/>
    </reaction>
    <physiologicalReaction direction="left-to-right" evidence="1">
        <dbReference type="Rhea" id="RHEA:29252"/>
    </physiologicalReaction>
</comment>
<comment type="subcellular location">
    <subcellularLocation>
        <location evidence="1">Cell inner membrane</location>
        <topology evidence="1">Multi-pass membrane protein</topology>
    </subcellularLocation>
</comment>
<comment type="similarity">
    <text evidence="1">Belongs to the NhaA Na(+)/H(+) (TC 2.A.33) antiporter family.</text>
</comment>
<proteinExistence type="inferred from homology"/>
<organism>
    <name type="scientific">Dechloromonas aromatica (strain RCB)</name>
    <dbReference type="NCBI Taxonomy" id="159087"/>
    <lineage>
        <taxon>Bacteria</taxon>
        <taxon>Pseudomonadati</taxon>
        <taxon>Pseudomonadota</taxon>
        <taxon>Betaproteobacteria</taxon>
        <taxon>Rhodocyclales</taxon>
        <taxon>Azonexaceae</taxon>
        <taxon>Dechloromonas</taxon>
    </lineage>
</organism>
<name>NHAA_DECAR</name>
<keyword id="KW-0050">Antiport</keyword>
<keyword id="KW-0997">Cell inner membrane</keyword>
<keyword id="KW-1003">Cell membrane</keyword>
<keyword id="KW-0406">Ion transport</keyword>
<keyword id="KW-0472">Membrane</keyword>
<keyword id="KW-0915">Sodium</keyword>
<keyword id="KW-0739">Sodium transport</keyword>
<keyword id="KW-0812">Transmembrane</keyword>
<keyword id="KW-1133">Transmembrane helix</keyword>
<keyword id="KW-0813">Transport</keyword>
<gene>
    <name evidence="1" type="primary">nhaA</name>
    <name type="ordered locus">Daro_0688</name>
</gene>
<dbReference type="EMBL" id="CP000089">
    <property type="protein sequence ID" value="AAZ45444.1"/>
    <property type="molecule type" value="Genomic_DNA"/>
</dbReference>
<dbReference type="SMR" id="Q47I87"/>
<dbReference type="STRING" id="159087.Daro_0688"/>
<dbReference type="KEGG" id="dar:Daro_0688"/>
<dbReference type="eggNOG" id="COG3004">
    <property type="taxonomic scope" value="Bacteria"/>
</dbReference>
<dbReference type="HOGENOM" id="CLU_015803_1_2_4"/>
<dbReference type="OrthoDB" id="9808135at2"/>
<dbReference type="GO" id="GO:0005886">
    <property type="term" value="C:plasma membrane"/>
    <property type="evidence" value="ECO:0007669"/>
    <property type="project" value="UniProtKB-SubCell"/>
</dbReference>
<dbReference type="GO" id="GO:0015385">
    <property type="term" value="F:sodium:proton antiporter activity"/>
    <property type="evidence" value="ECO:0007669"/>
    <property type="project" value="TreeGrafter"/>
</dbReference>
<dbReference type="GO" id="GO:0006885">
    <property type="term" value="P:regulation of pH"/>
    <property type="evidence" value="ECO:0007669"/>
    <property type="project" value="InterPro"/>
</dbReference>
<dbReference type="Gene3D" id="1.20.1530.10">
    <property type="entry name" value="Na+/H+ antiporter like domain"/>
    <property type="match status" value="1"/>
</dbReference>
<dbReference type="HAMAP" id="MF_01844">
    <property type="entry name" value="NhaA"/>
    <property type="match status" value="1"/>
</dbReference>
<dbReference type="InterPro" id="IPR023171">
    <property type="entry name" value="Na/H_antiporter_dom_sf"/>
</dbReference>
<dbReference type="InterPro" id="IPR004670">
    <property type="entry name" value="NhaA"/>
</dbReference>
<dbReference type="NCBIfam" id="TIGR00773">
    <property type="entry name" value="NhaA"/>
    <property type="match status" value="1"/>
</dbReference>
<dbReference type="NCBIfam" id="NF007111">
    <property type="entry name" value="PRK09560.1"/>
    <property type="match status" value="1"/>
</dbReference>
<dbReference type="PANTHER" id="PTHR30341:SF0">
    <property type="entry name" value="NA(+)_H(+) ANTIPORTER NHAA"/>
    <property type="match status" value="1"/>
</dbReference>
<dbReference type="PANTHER" id="PTHR30341">
    <property type="entry name" value="SODIUM ION/PROTON ANTIPORTER NHAA-RELATED"/>
    <property type="match status" value="1"/>
</dbReference>
<dbReference type="Pfam" id="PF06965">
    <property type="entry name" value="Na_H_antiport_1"/>
    <property type="match status" value="1"/>
</dbReference>
<sequence length="389" mass="41543">MADTQTKLSKTFSNFFASEKTSGILLILCTILSLSIANSLAGPAYQGFWHAIVAGLSIEHWVNDALMAVFFLFVGLELERELYNGELSNFRNALLPIFAAIGGIGVPALIHYTLNVGTPTQAGTGIPMATDIAFALGVLALLGSRVPASLKVFLTALAVMDDLGAIIVIAMFYTQQFSLVYLLSALAVFGLLLVLNRIFRVMSLLPYLLGGALMWFLMLKSGVHATIAGVLLAFAIPFSAKADDEKSPSHRLEHFLHKPVAFIILPIFALANTGIVIGSEWQHELLTPNSLGIIGGLVFGKPLGIALLSFVTVAIGVCRLPDDLKWTHIVGAGILGGIGFTMSIFITNLAFTNNASIINASKMAILMASVAAGGLGFLWLSFFQQNDNQ</sequence>
<accession>Q47I87</accession>